<accession>B0JL16</accession>
<comment type="function">
    <text evidence="1">Catalyzes the synthesis of activated sulfate.</text>
</comment>
<comment type="catalytic activity">
    <reaction evidence="1">
        <text>adenosine 5'-phosphosulfate + ATP = 3'-phosphoadenylyl sulfate + ADP + H(+)</text>
        <dbReference type="Rhea" id="RHEA:24152"/>
        <dbReference type="ChEBI" id="CHEBI:15378"/>
        <dbReference type="ChEBI" id="CHEBI:30616"/>
        <dbReference type="ChEBI" id="CHEBI:58243"/>
        <dbReference type="ChEBI" id="CHEBI:58339"/>
        <dbReference type="ChEBI" id="CHEBI:456216"/>
        <dbReference type="EC" id="2.7.1.25"/>
    </reaction>
</comment>
<comment type="pathway">
    <text evidence="1">Sulfur metabolism; hydrogen sulfide biosynthesis; sulfite from sulfate: step 2/3.</text>
</comment>
<comment type="similarity">
    <text evidence="1">Belongs to the APS kinase family.</text>
</comment>
<reference key="1">
    <citation type="journal article" date="2007" name="DNA Res.">
        <title>Complete genomic structure of the bloom-forming toxic cyanobacterium Microcystis aeruginosa NIES-843.</title>
        <authorList>
            <person name="Kaneko T."/>
            <person name="Nakajima N."/>
            <person name="Okamoto S."/>
            <person name="Suzuki I."/>
            <person name="Tanabe Y."/>
            <person name="Tamaoki M."/>
            <person name="Nakamura Y."/>
            <person name="Kasai F."/>
            <person name="Watanabe A."/>
            <person name="Kawashima K."/>
            <person name="Kishida Y."/>
            <person name="Ono A."/>
            <person name="Shimizu Y."/>
            <person name="Takahashi C."/>
            <person name="Minami C."/>
            <person name="Fujishiro T."/>
            <person name="Kohara M."/>
            <person name="Katoh M."/>
            <person name="Nakazaki N."/>
            <person name="Nakayama S."/>
            <person name="Yamada M."/>
            <person name="Tabata S."/>
            <person name="Watanabe M.M."/>
        </authorList>
    </citation>
    <scope>NUCLEOTIDE SEQUENCE [LARGE SCALE GENOMIC DNA]</scope>
    <source>
        <strain>NIES-843 / IAM M-247</strain>
    </source>
</reference>
<proteinExistence type="inferred from homology"/>
<dbReference type="EC" id="2.7.1.25" evidence="1"/>
<dbReference type="EMBL" id="AP009552">
    <property type="protein sequence ID" value="BAG02955.1"/>
    <property type="molecule type" value="Genomic_DNA"/>
</dbReference>
<dbReference type="RefSeq" id="WP_012266099.1">
    <property type="nucleotide sequence ID" value="NC_010296.1"/>
</dbReference>
<dbReference type="SMR" id="B0JL16"/>
<dbReference type="STRING" id="449447.MAE_31330"/>
<dbReference type="PaxDb" id="449447-MAE_31330"/>
<dbReference type="EnsemblBacteria" id="BAG02955">
    <property type="protein sequence ID" value="BAG02955"/>
    <property type="gene ID" value="MAE_31330"/>
</dbReference>
<dbReference type="KEGG" id="mar:MAE_31330"/>
<dbReference type="PATRIC" id="fig|449447.4.peg.2835"/>
<dbReference type="eggNOG" id="COG0529">
    <property type="taxonomic scope" value="Bacteria"/>
</dbReference>
<dbReference type="HOGENOM" id="CLU_046932_2_1_3"/>
<dbReference type="BioCyc" id="MAER449447:MAE_RS13570-MONOMER"/>
<dbReference type="UniPathway" id="UPA00140">
    <property type="reaction ID" value="UER00205"/>
</dbReference>
<dbReference type="Proteomes" id="UP000001510">
    <property type="component" value="Chromosome"/>
</dbReference>
<dbReference type="GO" id="GO:0005737">
    <property type="term" value="C:cytoplasm"/>
    <property type="evidence" value="ECO:0007669"/>
    <property type="project" value="TreeGrafter"/>
</dbReference>
<dbReference type="GO" id="GO:0004020">
    <property type="term" value="F:adenylylsulfate kinase activity"/>
    <property type="evidence" value="ECO:0007669"/>
    <property type="project" value="UniProtKB-UniRule"/>
</dbReference>
<dbReference type="GO" id="GO:0005524">
    <property type="term" value="F:ATP binding"/>
    <property type="evidence" value="ECO:0007669"/>
    <property type="project" value="UniProtKB-UniRule"/>
</dbReference>
<dbReference type="GO" id="GO:0004781">
    <property type="term" value="F:sulfate adenylyltransferase (ATP) activity"/>
    <property type="evidence" value="ECO:0007669"/>
    <property type="project" value="TreeGrafter"/>
</dbReference>
<dbReference type="GO" id="GO:0070814">
    <property type="term" value="P:hydrogen sulfide biosynthetic process"/>
    <property type="evidence" value="ECO:0007669"/>
    <property type="project" value="UniProtKB-UniRule"/>
</dbReference>
<dbReference type="GO" id="GO:0010134">
    <property type="term" value="P:sulfate assimilation via adenylyl sulfate reduction"/>
    <property type="evidence" value="ECO:0007669"/>
    <property type="project" value="TreeGrafter"/>
</dbReference>
<dbReference type="GO" id="GO:0019379">
    <property type="term" value="P:sulfate assimilation, phosphoadenylyl sulfate reduction by phosphoadenylyl-sulfate reductase (thioredoxin)"/>
    <property type="evidence" value="ECO:0007669"/>
    <property type="project" value="TreeGrafter"/>
</dbReference>
<dbReference type="CDD" id="cd02027">
    <property type="entry name" value="APSK"/>
    <property type="match status" value="1"/>
</dbReference>
<dbReference type="FunFam" id="3.40.50.300:FF:000802">
    <property type="entry name" value="Sulfate adenylyltransferase"/>
    <property type="match status" value="1"/>
</dbReference>
<dbReference type="Gene3D" id="3.40.50.300">
    <property type="entry name" value="P-loop containing nucleotide triphosphate hydrolases"/>
    <property type="match status" value="1"/>
</dbReference>
<dbReference type="HAMAP" id="MF_00065">
    <property type="entry name" value="Adenylyl_sulf_kinase"/>
    <property type="match status" value="1"/>
</dbReference>
<dbReference type="InterPro" id="IPR002891">
    <property type="entry name" value="APS_kinase"/>
</dbReference>
<dbReference type="InterPro" id="IPR027417">
    <property type="entry name" value="P-loop_NTPase"/>
</dbReference>
<dbReference type="InterPro" id="IPR050512">
    <property type="entry name" value="Sulf_AdTrans/APS_kinase"/>
</dbReference>
<dbReference type="NCBIfam" id="TIGR00455">
    <property type="entry name" value="apsK"/>
    <property type="match status" value="1"/>
</dbReference>
<dbReference type="NCBIfam" id="NF002059">
    <property type="entry name" value="PRK00889.1"/>
    <property type="match status" value="1"/>
</dbReference>
<dbReference type="NCBIfam" id="NF003013">
    <property type="entry name" value="PRK03846.1"/>
    <property type="match status" value="1"/>
</dbReference>
<dbReference type="PANTHER" id="PTHR42700">
    <property type="entry name" value="SULFATE ADENYLYLTRANSFERASE"/>
    <property type="match status" value="1"/>
</dbReference>
<dbReference type="PANTHER" id="PTHR42700:SF1">
    <property type="entry name" value="SULFATE ADENYLYLTRANSFERASE"/>
    <property type="match status" value="1"/>
</dbReference>
<dbReference type="Pfam" id="PF01583">
    <property type="entry name" value="APS_kinase"/>
    <property type="match status" value="1"/>
</dbReference>
<dbReference type="SUPFAM" id="SSF52540">
    <property type="entry name" value="P-loop containing nucleoside triphosphate hydrolases"/>
    <property type="match status" value="1"/>
</dbReference>
<feature type="chain" id="PRO_1000075086" description="Adenylyl-sulfate kinase">
    <location>
        <begin position="1"/>
        <end position="181"/>
    </location>
</feature>
<feature type="active site" description="Phosphoserine intermediate" evidence="1">
    <location>
        <position position="86"/>
    </location>
</feature>
<feature type="binding site" evidence="1">
    <location>
        <begin position="12"/>
        <end position="19"/>
    </location>
    <ligand>
        <name>ATP</name>
        <dbReference type="ChEBI" id="CHEBI:30616"/>
    </ligand>
</feature>
<sequence length="181" mass="20110">MKQRGVTVWLTGLSGAGKSTITEALQAKLIAEGYSIEVLDGDIVRTNLTKGLGFSKEDRDENIRRIGFVSNLLTRHGVIVLVSAISPYREIREEVRGKIGNFVEVFVNAPLSVCEDRDVKGLYKRARAGEIKSFTGIDDPYEPPFNPEVECRTDLETLEESVAKVWNKLTELGYIHQAVAV</sequence>
<evidence type="ECO:0000255" key="1">
    <source>
        <dbReference type="HAMAP-Rule" id="MF_00065"/>
    </source>
</evidence>
<protein>
    <recommendedName>
        <fullName evidence="1">Adenylyl-sulfate kinase</fullName>
        <ecNumber evidence="1">2.7.1.25</ecNumber>
    </recommendedName>
    <alternativeName>
        <fullName evidence="1">APS kinase</fullName>
    </alternativeName>
    <alternativeName>
        <fullName evidence="1">ATP adenosine-5'-phosphosulfate 3'-phosphotransferase</fullName>
    </alternativeName>
    <alternativeName>
        <fullName evidence="1">Adenosine-5'-phosphosulfate kinase</fullName>
    </alternativeName>
</protein>
<keyword id="KW-0067">ATP-binding</keyword>
<keyword id="KW-0418">Kinase</keyword>
<keyword id="KW-0547">Nucleotide-binding</keyword>
<keyword id="KW-0597">Phosphoprotein</keyword>
<keyword id="KW-0808">Transferase</keyword>
<organism>
    <name type="scientific">Microcystis aeruginosa (strain NIES-843 / IAM M-2473)</name>
    <dbReference type="NCBI Taxonomy" id="449447"/>
    <lineage>
        <taxon>Bacteria</taxon>
        <taxon>Bacillati</taxon>
        <taxon>Cyanobacteriota</taxon>
        <taxon>Cyanophyceae</taxon>
        <taxon>Oscillatoriophycideae</taxon>
        <taxon>Chroococcales</taxon>
        <taxon>Microcystaceae</taxon>
        <taxon>Microcystis</taxon>
    </lineage>
</organism>
<gene>
    <name evidence="1" type="primary">cysC</name>
    <name type="ordered locus">MAE_31330</name>
</gene>
<name>CYSC_MICAN</name>